<feature type="chain" id="PRO_0000419462" description="Trans-L-3-hydroxyproline dehydratase">
    <location>
        <begin position="1"/>
        <end position="326"/>
    </location>
</feature>
<feature type="active site" description="Proton acceptor" evidence="1">
    <location>
        <position position="80"/>
    </location>
</feature>
<feature type="binding site" evidence="1">
    <location>
        <begin position="81"/>
        <end position="82"/>
    </location>
    <ligand>
        <name>substrate</name>
    </ligand>
</feature>
<feature type="binding site" evidence="1">
    <location>
        <position position="241"/>
    </location>
    <ligand>
        <name>substrate</name>
    </ligand>
</feature>
<feature type="binding site" evidence="1">
    <location>
        <begin position="246"/>
        <end position="247"/>
    </location>
    <ligand>
        <name>substrate</name>
    </ligand>
</feature>
<evidence type="ECO:0000250" key="1"/>
<evidence type="ECO:0000269" key="2">
    <source>
    </source>
</evidence>
<evidence type="ECO:0000305" key="3"/>
<protein>
    <recommendedName>
        <fullName>Trans-L-3-hydroxyproline dehydratase</fullName>
        <ecNumber>4.2.1.77</ecNumber>
    </recommendedName>
    <alternativeName>
        <fullName>Trans-3-hydroxy-L-proline dehydratase</fullName>
    </alternativeName>
</protein>
<dbReference type="EC" id="4.2.1.77"/>
<dbReference type="EMBL" id="ACQM01021026">
    <property type="status" value="NOT_ANNOTATED_CDS"/>
    <property type="molecule type" value="Genomic_DNA"/>
</dbReference>
<dbReference type="SMR" id="P0DKB4"/>
<dbReference type="EnsemblMetazoa" id="XM_002734136.2">
    <property type="protein sequence ID" value="XP_002734182.2"/>
    <property type="gene ID" value="GeneID_100374014"/>
</dbReference>
<dbReference type="OrthoDB" id="6409228at2759"/>
<dbReference type="Proteomes" id="UP000694865">
    <property type="component" value="Unplaced"/>
</dbReference>
<dbReference type="GO" id="GO:0016836">
    <property type="term" value="F:hydro-lyase activity"/>
    <property type="evidence" value="ECO:0000314"/>
    <property type="project" value="UniProtKB"/>
</dbReference>
<dbReference type="GO" id="GO:0050346">
    <property type="term" value="F:trans-L-3-hydroxyproline dehydratase activity"/>
    <property type="evidence" value="ECO:0007669"/>
    <property type="project" value="UniProtKB-EC"/>
</dbReference>
<dbReference type="FunFam" id="3.10.310.10:FF:000007">
    <property type="entry name" value="Trans-L-3-hydroxyproline dehydratase"/>
    <property type="match status" value="1"/>
</dbReference>
<dbReference type="Gene3D" id="3.10.310.10">
    <property type="entry name" value="Diaminopimelate Epimerase, Chain A, domain 1"/>
    <property type="match status" value="2"/>
</dbReference>
<dbReference type="InterPro" id="IPR008794">
    <property type="entry name" value="Pro_racemase_fam"/>
</dbReference>
<dbReference type="PANTHER" id="PTHR33442">
    <property type="entry name" value="TRANS-3-HYDROXY-L-PROLINE DEHYDRATASE"/>
    <property type="match status" value="1"/>
</dbReference>
<dbReference type="PANTHER" id="PTHR33442:SF1">
    <property type="entry name" value="TRANS-3-HYDROXY-L-PROLINE DEHYDRATASE"/>
    <property type="match status" value="1"/>
</dbReference>
<dbReference type="Pfam" id="PF05544">
    <property type="entry name" value="Pro_racemase"/>
    <property type="match status" value="1"/>
</dbReference>
<dbReference type="PIRSF" id="PIRSF029792">
    <property type="entry name" value="Pro_racemase"/>
    <property type="match status" value="1"/>
</dbReference>
<dbReference type="SFLD" id="SFLDS00028">
    <property type="entry name" value="Proline_Racemase"/>
    <property type="match status" value="1"/>
</dbReference>
<dbReference type="SUPFAM" id="SSF54506">
    <property type="entry name" value="Diaminopimelate epimerase-like"/>
    <property type="match status" value="1"/>
</dbReference>
<organism>
    <name type="scientific">Saccoglossus kowalevskii</name>
    <name type="common">Acorn worm</name>
    <dbReference type="NCBI Taxonomy" id="10224"/>
    <lineage>
        <taxon>Eukaryota</taxon>
        <taxon>Metazoa</taxon>
        <taxon>Hemichordata</taxon>
        <taxon>Enteropneusta</taxon>
        <taxon>Harrimaniidae</taxon>
        <taxon>Saccoglossus</taxon>
    </lineage>
</organism>
<keyword id="KW-0456">Lyase</keyword>
<reference key="1">
    <citation type="submission" date="2009-07" db="EMBL/GenBank/DDBJ databases">
        <title>Genome Sequence of Acorn Worm (Saccoglossus kowalevskii).</title>
        <authorList>
            <person name="Qu J."/>
            <person name="Zhang L."/>
            <person name="Abraham K.K."/>
            <person name="Akbar H."/>
            <person name="Ali S."/>
            <person name="Alvi O."/>
            <person name="Anosike U.S."/>
            <person name="Aqrawi P.K."/>
            <person name="Archer P.M."/>
            <person name="Arias F."/>
            <person name="Arredondo H.H."/>
            <person name="Attaway T."/>
            <person name="Babu C."/>
            <person name="Bachman B."/>
            <person name="Bandaranaike D.P."/>
            <person name="Barton M.L."/>
            <person name="Battles P.K."/>
            <person name="Bell A.V."/>
            <person name="Bell S.N."/>
            <person name="Berhane-Mersha D."/>
            <person name="Bess C.M."/>
            <person name="Bickham C."/>
            <person name="Blyth P.R."/>
            <person name="Bolden T.M."/>
            <person name="Bonnen P.E."/>
            <person name="Bourquin T."/>
            <person name="Buhay J.C."/>
            <person name="Canada A."/>
            <person name="Cardenas V."/>
            <person name="Carter K."/>
            <person name="Carter A.J."/>
            <person name="Chaboub L."/>
            <person name="Chacko J."/>
            <person name="Chandrabose M.N."/>
            <person name="Chang K."/>
            <person name="Chavez D."/>
            <person name="Chavez A."/>
            <person name="Chen R."/>
            <person name="Chen G."/>
            <person name="Chen D."/>
            <person name="Chu H."/>
            <person name="Clerc Blankenburg K.P."/>
            <person name="Cockrell R."/>
            <person name="Collier R.T."/>
            <person name="Coyle M.D."/>
            <person name="Cree A."/>
            <person name="Curry S.M."/>
            <person name="Dao M.D."/>
            <person name="Davila M."/>
            <person name="Davy-Carroll L."/>
            <person name="Deiros D.R."/>
            <person name="Demen R."/>
            <person name="Deng J."/>
            <person name="Denson S."/>
            <person name="Dilber J.M."/>
            <person name="Ding Y."/>
            <person name="Dinh H.H."/>
            <person name="Drabek R.B."/>
            <person name="Du A."/>
            <person name="Dugan-Rocha S."/>
            <person name="Dunn A.M."/>
            <person name="Durbin K.J."/>
            <person name="Ebong V.E."/>
            <person name="Elkadir S."/>
            <person name="Espinosa V.C."/>
            <person name="Fernandez S."/>
            <person name="Fernando P.R."/>
            <person name="Ferrer A.R."/>
            <person name="Finley M.C."/>
            <person name="Flagg N."/>
            <person name="Forbes L.D."/>
            <person name="Fowler R.G."/>
            <person name="Francis C.S."/>
            <person name="Fu Q."/>
            <person name="Gabisi R.A."/>
            <person name="Ganer J."/>
            <person name="Garcia S.M."/>
            <person name="Garcia R.M."/>
            <person name="Garner T.T."/>
            <person name="Garrett T.E."/>
            <person name="Gingras M."/>
            <person name="Goodell J."/>
            <person name="Gross S."/>
            <person name="Gubbala S."/>
            <person name="Guevara W.V."/>
            <person name="Gurugunti A."/>
            <person name="Hale W."/>
            <person name="Hall O."/>
            <person name="Hamid H."/>
            <person name="Han Y."/>
            <person name="Harbes B.A."/>
            <person name="Havlak P."/>
            <person name="Hawes A.C."/>
            <person name="Hawkins E.S."/>
            <person name="Haynes S.J."/>
            <person name="Hernandez J."/>
            <person name="Hines S."/>
            <person name="Hirani K."/>
            <person name="Hitchens M.E."/>
            <person name="Hogues M.E."/>
            <person name="Holder M."/>
            <person name="Hollins B."/>
            <person name="Hume J."/>
            <person name="Igboeli O.C."/>
            <person name="Jackson L.R."/>
            <person name="Jacob S.K."/>
            <person name="Jakkamsetti A."/>
            <person name="Jhangiani S.N."/>
            <person name="Jiang H."/>
            <person name="Jing C."/>
            <person name="Johnson A.J."/>
            <person name="Johnson B."/>
            <person name="Jones J."/>
            <person name="Joshi V."/>
            <person name="Joy C."/>
            <person name="Kalu J.B."/>
            <person name="Khan N.R."/>
            <person name="Khan Z.M."/>
            <person name="Kidwai S."/>
            <person name="Kisamo H."/>
            <person name="Kovar C.L."/>
            <person name="Kowis A.N."/>
            <person name="Lago M.T."/>
            <person name="Lago L.A."/>
            <person name="Lai C."/>
            <person name="Lara F."/>
            <person name="Latif Z.A."/>
            <person name="Le T.T."/>
            <person name="Leal B."/>
            <person name="Lee S.L."/>
            <person name="Legall F.H."/>
            <person name="Lemon S.J."/>
            <person name="Lewis L.R."/>
            <person name="Li Z."/>
            <person name="Liu Y."/>
            <person name="Liu W."/>
            <person name="Liu J."/>
            <person name="Liu X."/>
            <person name="Liu Y."/>
            <person name="Liyanage D."/>
            <person name="London P."/>
            <person name="Lopez J."/>
            <person name="Lorensuhewa L.M."/>
            <person name="Lozado R.J."/>
            <person name="Lu Y."/>
            <person name="Madu R.C."/>
            <person name="Malloy K."/>
            <person name="Martinez E."/>
            <person name="Mathew T."/>
            <person name="McPherson J.D."/>
            <person name="Mercado I.C."/>
            <person name="Mercado C."/>
            <person name="Metcalf G.A."/>
            <person name="Metzker M.L."/>
            <person name="Milosavljevic A."/>
            <person name="Moen C."/>
            <person name="Morales K.R."/>
            <person name="Morgan M.B."/>
            <person name="Mulakkamparambath A."/>
            <person name="Munidasa M."/>
            <person name="Murray D.D."/>
            <person name="Nazareth L.V."/>
            <person name="Ng B.M."/>
            <person name="Ngo D.N."/>
            <person name="Nguyen T.S."/>
            <person name="Nguyen L."/>
            <person name="Nguyen P.Q."/>
            <person name="Nwaokelemeh O.O."/>
            <person name="Obregon M."/>
            <person name="Okwuonu K.C."/>
            <person name="Onwere C.G."/>
            <person name="Osuji N."/>
            <person name="Padilla R."/>
            <person name="Parker D.N."/>
            <person name="Parra S.A."/>
            <person name="Pasternak S."/>
            <person name="Patel R.R."/>
            <person name="Patel B.M."/>
            <person name="Patil S.S."/>
            <person name="Perez L."/>
            <person name="Perez A."/>
            <person name="Perez Y.Y."/>
            <person name="Pham P.A."/>
            <person name="Pham T.L."/>
            <person name="Primus E.L."/>
            <person name="Pu L."/>
            <person name="Puazo M."/>
            <person name="Qin X."/>
            <person name="Quiroz J.B."/>
            <person name="Rabata D."/>
            <person name="Rachlin E.K."/>
            <person name="Raj R.A."/>
            <person name="Reid J.G."/>
            <person name="Ren Y."/>
            <person name="Robinson T."/>
            <person name="Rojas A."/>
            <person name="Rouhana J."/>
            <person name="Ruiz S."/>
            <person name="Ruiz M.J."/>
            <person name="Saada N."/>
            <person name="Sabo A."/>
            <person name="San Lucas F."/>
            <person name="Santibanez J."/>
            <person name="Savery G.G."/>
            <person name="Scheel M."/>
            <person name="Scherer S.E."/>
            <person name="Schneider B.W."/>
            <person name="Shen Y."/>
            <person name="Shen H."/>
            <person name="Sisson I.O."/>
            <person name="Skiles W.J."/>
            <person name="Sodergren E."/>
            <person name="Song X."/>
            <person name="Song B."/>
            <person name="Tang L."/>
            <person name="Thelus R.A."/>
            <person name="Thomas N."/>
            <person name="Thorn R.D."/>
            <person name="Thornton R.D."/>
            <person name="Tisius J.R."/>
            <person name="Toledanes G."/>
            <person name="Tombrello J."/>
            <person name="Trejos Z.Y."/>
            <person name="Usmani K."/>
            <person name="Varghese R.T."/>
            <person name="Vattathil S."/>
            <person name="Vee V."/>
            <person name="Villasana D."/>
            <person name="Walker D.L."/>
            <person name="Wang S."/>
            <person name="Wang Q."/>
            <person name="Warren J.T."/>
            <person name="Watt J.E."/>
            <person name="Wei X."/>
            <person name="Weissenberger G.M."/>
            <person name="Wheeler D.A."/>
            <person name="White C.S."/>
            <person name="Wilczek-Boney K.B."/>
            <person name="Williams G.J."/>
            <person name="Williams G.A."/>
            <person name="Williams A.C."/>
            <person name="Williams R.E."/>
            <person name="Wilson K.C."/>
            <person name="Woghiren I.O."/>
            <person name="Wright R.A."/>
            <person name="Xi L."/>
            <person name="Xin Y."/>
            <person name="Yao J."/>
            <person name="Zhang J."/>
            <person name="Zhao Z."/>
            <person name="Zhou J."/>
            <person name="Zhou C."/>
            <person name="Zhu D."/>
            <person name="Zhu Y."/>
            <person name="Muzny D.M."/>
            <person name="Richards S."/>
            <person name="Weinstock G."/>
            <person name="Worley K.C."/>
            <person name="Gibbs R.A."/>
        </authorList>
    </citation>
    <scope>NUCLEOTIDE SEQUENCE [LARGE SCALE GENOMIC DNA]</scope>
</reference>
<reference key="2">
    <citation type="journal article" date="2012" name="J. Biol. Chem.">
        <title>Identification of a human trans-3-Hydroxy-L-proline dehydratase, the first characterized member of a novel family of proline racemase-like enzymes.</title>
        <authorList>
            <person name="Visser W.F."/>
            <person name="Verhoeven-Duif N.M."/>
            <person name="de Koning T.J."/>
        </authorList>
    </citation>
    <scope>FUNCTION</scope>
    <scope>CATALYTIC ACTIVITY</scope>
</reference>
<gene>
    <name type="primary">l3hypdh</name>
</gene>
<proteinExistence type="evidence at protein level"/>
<sequence>MHTGGEPLRIVTDGFPKPDGKTILQKRRFVKEKLDNFRKLLMHEPRGHYDMYGALLVEPDIEDADIAVLFMDNRSYSTMCGHAVIALGRYATDYGYVRPTEPETKVNIECPCGLVKALVEYKNGKSGSVRFQSVPAFVFATDVELNVQGHGKVKVDISYGGAFYAFISADKLGLDLWKTPINQIKDAATMVTNAVKNEVQLEHPDDNDLAFIYGTIVTDGKDEYSDEPTANICVFADAQVDRSPTGSGVTARTALQYHKRHISLNKSRVFVNARIGSKFSAKPVRQTKCGSYDAVIIEVSGHAFYTGKSAFTFEEDDPLKGGFLLK</sequence>
<name>T3HPD_SACKO</name>
<accession>P0DKB4</accession>
<comment type="function">
    <text evidence="2">Catalyzes the dehydration of trans-3-hydroxy-L-proline to delta-1-pyrroline-2-carboxylate (Pyr2C).</text>
</comment>
<comment type="catalytic activity">
    <reaction evidence="2">
        <text>trans-3-hydroxy-L-proline = 1-pyrroline-2-carboxylate + H2O</text>
        <dbReference type="Rhea" id="RHEA:10320"/>
        <dbReference type="ChEBI" id="CHEBI:15377"/>
        <dbReference type="ChEBI" id="CHEBI:39785"/>
        <dbReference type="ChEBI" id="CHEBI:57938"/>
        <dbReference type="EC" id="4.2.1.77"/>
    </reaction>
</comment>
<comment type="subunit">
    <text evidence="1">Homodimer.</text>
</comment>
<comment type="miscellaneous">
    <text evidence="1">In contrast to the T.cruzi proline racemase enzyme, lacks the conserved Cys at position 245 which is replaced by a Thr residue, transforming the racemase activity into dehydratase activity.</text>
</comment>
<comment type="similarity">
    <text evidence="3">Belongs to the proline racemase family.</text>
</comment>